<reference key="1">
    <citation type="journal article" date="2000" name="Gene">
        <title>cDNA cloning of acyl-CoA desaturase homologs in the silkworm, Bombyx mori.</title>
        <authorList>
            <person name="Yoshiga T."/>
            <person name="Okano K."/>
            <person name="Mita K."/>
            <person name="Shimada T."/>
            <person name="Matsumoto S."/>
        </authorList>
    </citation>
    <scope>NUCLEOTIDE SEQUENCE [MRNA]</scope>
    <source>
        <tissue evidence="7">Pheromone gland</tissue>
    </source>
</reference>
<reference key="2">
    <citation type="journal article" date="2004" name="Proc. Natl. Acad. Sci. U.S.A.">
        <title>Involvement of a bifunctional fatty-acyl desaturase in the biosynthesis of the silkmoth, Bombyx mori, sex pheromone.</title>
        <authorList>
            <person name="Moto K."/>
            <person name="Suzuki M.G."/>
            <person name="Hull J.J."/>
            <person name="Kurata R."/>
            <person name="Takahashi S."/>
            <person name="Yamamoto M."/>
            <person name="Okano K."/>
            <person name="Imai K."/>
            <person name="Ando T."/>
            <person name="Matsumoto S."/>
        </authorList>
    </citation>
    <scope>NUCLEOTIDE SEQUENCE [MRNA]</scope>
    <scope>FUNCTION</scope>
    <scope>CATALYTIC ACTIVITY</scope>
    <scope>TISSUE SPECIFICITY</scope>
    <source>
        <strain evidence="8">p50T</strain>
        <tissue evidence="8">Pheromone gland</tissue>
    </source>
</reference>
<reference key="3">
    <citation type="journal article" date="2008" name="Insect Biochem. Mol. Biol.">
        <title>The genome of a lepidopteran model insect, the silkworm Bombyx mori.</title>
        <authorList>
            <consortium name="International Silkworm Genome Consortium"/>
        </authorList>
    </citation>
    <scope>NUCLEOTIDE SEQUENCE [LARGE SCALE GENOMIC DNA]</scope>
    <source>
        <strain>p50T</strain>
    </source>
</reference>
<feature type="chain" id="PRO_0000434734" description="(11Z)-hexadec-11-enoyl-CoA conjugase">
    <location>
        <begin position="1"/>
        <end position="330"/>
    </location>
</feature>
<feature type="transmembrane region" description="Helical" evidence="2">
    <location>
        <begin position="37"/>
        <end position="57"/>
    </location>
</feature>
<feature type="transmembrane region" description="Helical" evidence="2">
    <location>
        <begin position="65"/>
        <end position="85"/>
    </location>
</feature>
<feature type="transmembrane region" description="Helical" evidence="2">
    <location>
        <begin position="101"/>
        <end position="121"/>
    </location>
</feature>
<feature type="transmembrane region" description="Helical" evidence="2">
    <location>
        <begin position="185"/>
        <end position="205"/>
    </location>
</feature>
<feature type="transmembrane region" description="Helical" evidence="2">
    <location>
        <begin position="216"/>
        <end position="238"/>
    </location>
</feature>
<feature type="short sequence motif" description="Histidine box-1" evidence="6">
    <location>
        <begin position="87"/>
        <end position="92"/>
    </location>
</feature>
<feature type="short sequence motif" description="Histidine box-2" evidence="6">
    <location>
        <begin position="124"/>
        <end position="128"/>
    </location>
</feature>
<feature type="short sequence motif" description="Histidine box-3" evidence="6">
    <location>
        <begin position="264"/>
        <end position="268"/>
    </location>
</feature>
<feature type="sequence conflict" description="In Ref. 1; AAF80355." evidence="6" ref="1">
    <original>L</original>
    <variation>I</variation>
    <location>
        <position position="105"/>
    </location>
</feature>
<accession>Q75PL7</accession>
<accession>H9JPV8</accession>
<accession>Q9NDH3</accession>
<sequence>MPPNSVDKTNETEYLKDNHVDYEKLIAPQASPIKHKIVVMNVIRFSYLHIAGLYGLYLCFTSAKLATSVFAIVLFFLGNFGITAGAHRLWSHNGYKVKLPLEILLMVFNSIAFQNTIFTWVRDHRLHHKYTDTDADPHNATRGFFFSHIGWLLVRKHPMVKIAGKSLDMSDIYCNPLLRFQKKYAIPFIGTICFIIPTLAPMYFWGESLNNAWHITVLRYIFSLNGTFLVNSAAHLWGYKPYDKSLKATQSGMANAFTFGEGFHNYHHVFPWDYRADELGDRYINLTTRFIDFFAWMGWAYDLKTASTNIIEKRALRTGDGTYKRPNGMN</sequence>
<gene>
    <name evidence="4" type="primary">desat1</name>
    <name evidence="5" type="ORF">BGIBMGA011563</name>
</gene>
<organism>
    <name type="scientific">Bombyx mori</name>
    <name type="common">Silk moth</name>
    <dbReference type="NCBI Taxonomy" id="7091"/>
    <lineage>
        <taxon>Eukaryota</taxon>
        <taxon>Metazoa</taxon>
        <taxon>Ecdysozoa</taxon>
        <taxon>Arthropoda</taxon>
        <taxon>Hexapoda</taxon>
        <taxon>Insecta</taxon>
        <taxon>Pterygota</taxon>
        <taxon>Neoptera</taxon>
        <taxon>Endopterygota</taxon>
        <taxon>Lepidoptera</taxon>
        <taxon>Glossata</taxon>
        <taxon>Ditrysia</taxon>
        <taxon>Bombycoidea</taxon>
        <taxon>Bombycidae</taxon>
        <taxon>Bombycinae</taxon>
        <taxon>Bombyx</taxon>
    </lineage>
</organism>
<name>DESAT_BOMMO</name>
<keyword id="KW-0275">Fatty acid biosynthesis</keyword>
<keyword id="KW-0276">Fatty acid metabolism</keyword>
<keyword id="KW-0408">Iron</keyword>
<keyword id="KW-0444">Lipid biosynthesis</keyword>
<keyword id="KW-0443">Lipid metabolism</keyword>
<keyword id="KW-0472">Membrane</keyword>
<keyword id="KW-0479">Metal-binding</keyword>
<keyword id="KW-0560">Oxidoreductase</keyword>
<keyword id="KW-1185">Reference proteome</keyword>
<keyword id="KW-0812">Transmembrane</keyword>
<keyword id="KW-1133">Transmembrane helix</keyword>
<protein>
    <recommendedName>
        <fullName>(11Z)-hexadec-11-enoyl-CoA conjugase</fullName>
        <shortName evidence="4">Bmpgdesat1</shortName>
        <ecNumber evidence="3">1.14.19.15</ecNumber>
    </recommendedName>
    <alternativeName>
        <fullName>Acyl-CoA Delta(11) desaturase</fullName>
        <ecNumber evidence="3">1.14.19.5</ecNumber>
    </alternativeName>
    <alternativeName>
        <fullName evidence="8">Acyl-CoA Z11/delta10,12 desaturase</fullName>
    </alternativeName>
</protein>
<comment type="function">
    <text evidence="3">Fatty acid desaturase that catalyzes 2 consecutive steps in the biosynthesis of bombykol, a sex pheromone produced by the moth. First acts as an acyl-CoA Delta(11) desaturase (1) by catalyzing the formation of Delta(11) fatty acyl precursors. Then acts as a (11Z)-hexadec-11-enoyl-CoA conjugase (2) by converting a single cis double bond at position 11 of (11Z)-hexadec-11-enoyl-CoA into conjugated 10 trans and 12 cis double bonds.</text>
</comment>
<comment type="catalytic activity">
    <reaction evidence="3">
        <text>an 11,12-saturated fatty acyl-CoA + 2 Fe(II)-[cytochrome b5] + O2 + 2 H(+) = an (11Z)-Delta(11)-fatty acyl-CoA + 2 Fe(III)-[cytochrome b5] + 2 H2O</text>
        <dbReference type="Rhea" id="RHEA:25852"/>
        <dbReference type="Rhea" id="RHEA-COMP:10438"/>
        <dbReference type="Rhea" id="RHEA-COMP:10439"/>
        <dbReference type="ChEBI" id="CHEBI:15377"/>
        <dbReference type="ChEBI" id="CHEBI:15378"/>
        <dbReference type="ChEBI" id="CHEBI:15379"/>
        <dbReference type="ChEBI" id="CHEBI:29033"/>
        <dbReference type="ChEBI" id="CHEBI:29034"/>
        <dbReference type="ChEBI" id="CHEBI:84947"/>
        <dbReference type="ChEBI" id="CHEBI:84948"/>
        <dbReference type="EC" id="1.14.19.5"/>
    </reaction>
</comment>
<comment type="catalytic activity">
    <reaction evidence="3">
        <text>(11Z)-hexadecenoyl-CoA + AH2 + O2 = (10E,12Z)-hexadecadienoyl-CoA + A + 2 H2O</text>
        <dbReference type="Rhea" id="RHEA:46444"/>
        <dbReference type="ChEBI" id="CHEBI:13193"/>
        <dbReference type="ChEBI" id="CHEBI:15377"/>
        <dbReference type="ChEBI" id="CHEBI:15379"/>
        <dbReference type="ChEBI" id="CHEBI:17499"/>
        <dbReference type="ChEBI" id="CHEBI:86120"/>
        <dbReference type="ChEBI" id="CHEBI:86122"/>
        <dbReference type="EC" id="1.14.19.15"/>
    </reaction>
</comment>
<comment type="cofactor">
    <cofactor evidence="1">
        <name>Fe(2+)</name>
        <dbReference type="ChEBI" id="CHEBI:29033"/>
    </cofactor>
</comment>
<comment type="subcellular location">
    <subcellularLocation>
        <location evidence="2">Membrane</location>
        <topology evidence="2">Multi-pass membrane protein</topology>
    </subcellularLocation>
</comment>
<comment type="tissue specificity">
    <text evidence="3">Highly expressed in the pheromone gland.</text>
</comment>
<comment type="domain">
    <text evidence="6">The histidine box domains may contain the active site and/or be involved in metal ion binding.</text>
</comment>
<comment type="similarity">
    <text evidence="6">Belongs to the fatty acid desaturase type 1 family.</text>
</comment>
<comment type="sequence caution" evidence="6">
    <conflict type="erroneous gene model prediction">
        <sequence resource="EMBL" id="BABH01015400"/>
    </conflict>
</comment>
<dbReference type="EC" id="1.14.19.15" evidence="3"/>
<dbReference type="EC" id="1.14.19.5" evidence="3"/>
<dbReference type="EMBL" id="AF157627">
    <property type="protein sequence ID" value="AAF80355.1"/>
    <property type="molecule type" value="mRNA"/>
</dbReference>
<dbReference type="EMBL" id="AB166851">
    <property type="protein sequence ID" value="BAD18122.1"/>
    <property type="molecule type" value="mRNA"/>
</dbReference>
<dbReference type="EMBL" id="BABH01015400">
    <property type="status" value="NOT_ANNOTATED_CDS"/>
    <property type="molecule type" value="Genomic_DNA"/>
</dbReference>
<dbReference type="RefSeq" id="NP_001037017.2">
    <property type="nucleotide sequence ID" value="NM_001043552.2"/>
</dbReference>
<dbReference type="SMR" id="Q75PL7"/>
<dbReference type="STRING" id="7091.Q75PL7"/>
<dbReference type="EnsemblMetazoa" id="NM_001043552.2">
    <property type="protein sequence ID" value="NP_001037017.2"/>
    <property type="gene ID" value="GeneID_692567"/>
</dbReference>
<dbReference type="GeneID" id="692567"/>
<dbReference type="KEGG" id="bmor:692567"/>
<dbReference type="CTD" id="117369"/>
<dbReference type="InParanoid" id="Q75PL7"/>
<dbReference type="OrthoDB" id="167824at7088"/>
<dbReference type="BioCyc" id="MetaCyc:MONOMER-18415"/>
<dbReference type="BRENDA" id="1.14.19.15">
    <property type="organism ID" value="890"/>
</dbReference>
<dbReference type="Proteomes" id="UP000005204">
    <property type="component" value="Unassembled WGS sequence"/>
</dbReference>
<dbReference type="GO" id="GO:0005789">
    <property type="term" value="C:endoplasmic reticulum membrane"/>
    <property type="evidence" value="ECO:0007669"/>
    <property type="project" value="TreeGrafter"/>
</dbReference>
<dbReference type="GO" id="GO:0017105">
    <property type="term" value="F:acyl-CoA 11-(Z)-desaturase activity"/>
    <property type="evidence" value="ECO:0007669"/>
    <property type="project" value="UniProtKB-EC"/>
</dbReference>
<dbReference type="GO" id="GO:0005506">
    <property type="term" value="F:iron ion binding"/>
    <property type="evidence" value="ECO:0007669"/>
    <property type="project" value="TreeGrafter"/>
</dbReference>
<dbReference type="GO" id="GO:0016717">
    <property type="term" value="F:oxidoreductase activity, acting on paired donors, with oxidation of a pair of donors resulting in the reduction of molecular oxygen to two molecules of water"/>
    <property type="evidence" value="ECO:0000314"/>
    <property type="project" value="UniProtKB"/>
</dbReference>
<dbReference type="GO" id="GO:0004768">
    <property type="term" value="F:stearoyl-CoA 9-desaturase activity"/>
    <property type="evidence" value="ECO:0007669"/>
    <property type="project" value="TreeGrafter"/>
</dbReference>
<dbReference type="GO" id="GO:0006633">
    <property type="term" value="P:fatty acid biosynthetic process"/>
    <property type="evidence" value="ECO:0000314"/>
    <property type="project" value="UniProtKB"/>
</dbReference>
<dbReference type="GO" id="GO:0042811">
    <property type="term" value="P:pheromone biosynthetic process"/>
    <property type="evidence" value="ECO:0000314"/>
    <property type="project" value="UniProtKB"/>
</dbReference>
<dbReference type="GO" id="GO:0006636">
    <property type="term" value="P:unsaturated fatty acid biosynthetic process"/>
    <property type="evidence" value="ECO:0007669"/>
    <property type="project" value="TreeGrafter"/>
</dbReference>
<dbReference type="CDD" id="cd03505">
    <property type="entry name" value="Delta9-FADS-like"/>
    <property type="match status" value="1"/>
</dbReference>
<dbReference type="InterPro" id="IPR015876">
    <property type="entry name" value="Acyl-CoA_DS"/>
</dbReference>
<dbReference type="InterPro" id="IPR005804">
    <property type="entry name" value="FA_desaturase_dom"/>
</dbReference>
<dbReference type="InterPro" id="IPR001522">
    <property type="entry name" value="FADS-1_CS"/>
</dbReference>
<dbReference type="PANTHER" id="PTHR11351">
    <property type="entry name" value="ACYL-COA DESATURASE"/>
    <property type="match status" value="1"/>
</dbReference>
<dbReference type="PANTHER" id="PTHR11351:SF31">
    <property type="entry name" value="DESATURASE 1, ISOFORM A-RELATED"/>
    <property type="match status" value="1"/>
</dbReference>
<dbReference type="Pfam" id="PF00487">
    <property type="entry name" value="FA_desaturase"/>
    <property type="match status" value="1"/>
</dbReference>
<dbReference type="PRINTS" id="PR00075">
    <property type="entry name" value="FACDDSATRASE"/>
</dbReference>
<dbReference type="PROSITE" id="PS00476">
    <property type="entry name" value="FATTY_ACID_DESATUR_1"/>
    <property type="match status" value="1"/>
</dbReference>
<proteinExistence type="evidence at protein level"/>
<evidence type="ECO:0000250" key="1">
    <source>
        <dbReference type="UniProtKB" id="O00767"/>
    </source>
</evidence>
<evidence type="ECO:0000255" key="2"/>
<evidence type="ECO:0000269" key="3">
    <source>
    </source>
</evidence>
<evidence type="ECO:0000303" key="4">
    <source>
    </source>
</evidence>
<evidence type="ECO:0000303" key="5">
    <source>
    </source>
</evidence>
<evidence type="ECO:0000305" key="6"/>
<evidence type="ECO:0000312" key="7">
    <source>
        <dbReference type="EMBL" id="AAF80355.1"/>
    </source>
</evidence>
<evidence type="ECO:0000312" key="8">
    <source>
        <dbReference type="EMBL" id="BAD18122.1"/>
    </source>
</evidence>